<protein>
    <recommendedName>
        <fullName evidence="1">PTS system mannitol-specific EIICBA component</fullName>
    </recommendedName>
    <alternativeName>
        <fullName evidence="1">EIICBA-Mtl</fullName>
        <shortName evidence="1">EII-Mtl</shortName>
    </alternativeName>
    <domain>
        <recommendedName>
            <fullName evidence="1">Mannitol permease IIC component</fullName>
        </recommendedName>
        <alternativeName>
            <fullName evidence="1">PTS system mannitol-specific EIIC component</fullName>
        </alternativeName>
    </domain>
    <domain>
        <recommendedName>
            <fullName evidence="1">Mannitol-specific phosphotransferase enzyme IIB component</fullName>
            <ecNumber evidence="1">2.7.1.197</ecNumber>
        </recommendedName>
        <alternativeName>
            <fullName evidence="1">PTS system mannitol-specific EIIB component</fullName>
        </alternativeName>
    </domain>
    <domain>
        <recommendedName>
            <fullName evidence="1">Mannitol-specific phosphotransferase enzyme IIA component</fullName>
        </recommendedName>
        <alternativeName>
            <fullName evidence="1">PTS system mannitol-specific EIIA component</fullName>
        </alternativeName>
    </domain>
</protein>
<gene>
    <name type="primary">mtlA</name>
    <name type="ordered locus">PM1061</name>
</gene>
<accession>Q9CLY8</accession>
<proteinExistence type="inferred from homology"/>
<reference key="1">
    <citation type="journal article" date="2001" name="Proc. Natl. Acad. Sci. U.S.A.">
        <title>Complete genomic sequence of Pasteurella multocida Pm70.</title>
        <authorList>
            <person name="May B.J."/>
            <person name="Zhang Q."/>
            <person name="Li L.L."/>
            <person name="Paustian M.L."/>
            <person name="Whittam T.S."/>
            <person name="Kapur V."/>
        </authorList>
    </citation>
    <scope>NUCLEOTIDE SEQUENCE [LARGE SCALE GENOMIC DNA]</scope>
    <source>
        <strain>Pm70</strain>
    </source>
</reference>
<name>PTM3C_PASMU</name>
<feature type="chain" id="PRO_0000186616" description="PTS system mannitol-specific EIICBA component">
    <location>
        <begin position="1"/>
        <end position="624"/>
    </location>
</feature>
<feature type="transmembrane region" description="Helical" evidence="1">
    <location>
        <begin position="25"/>
        <end position="46"/>
    </location>
</feature>
<feature type="transmembrane region" description="Helical" evidence="1">
    <location>
        <begin position="51"/>
        <end position="71"/>
    </location>
</feature>
<feature type="transmembrane region" description="Helical" evidence="1">
    <location>
        <begin position="135"/>
        <end position="156"/>
    </location>
</feature>
<feature type="transmembrane region" description="Helical" evidence="1">
    <location>
        <begin position="166"/>
        <end position="186"/>
    </location>
</feature>
<feature type="transmembrane region" description="Helical" evidence="1">
    <location>
        <begin position="274"/>
        <end position="293"/>
    </location>
</feature>
<feature type="transmembrane region" description="Helical" evidence="1">
    <location>
        <begin position="314"/>
        <end position="335"/>
    </location>
</feature>
<feature type="domain" description="PTS EIIC type-2" evidence="4">
    <location>
        <begin position="13"/>
        <end position="336"/>
    </location>
</feature>
<feature type="domain" description="PTS EIIB type-2" evidence="3">
    <location>
        <begin position="372"/>
        <end position="463"/>
    </location>
</feature>
<feature type="domain" description="PTS EIIA type-2" evidence="2">
    <location>
        <begin position="482"/>
        <end position="624"/>
    </location>
</feature>
<feature type="active site" description="Phosphocysteine intermediate; for EIIB activity" evidence="1">
    <location>
        <position position="378"/>
    </location>
</feature>
<feature type="active site" description="Tele-phosphohistidine intermediate; for EIIA activity" evidence="1 2">
    <location>
        <position position="542"/>
    </location>
</feature>
<feature type="site" description="Stabilizes the transition state in the phosphoryl transfer from HPr to EIIA" evidence="1">
    <location>
        <position position="526"/>
    </location>
</feature>
<feature type="modified residue" description="Phosphocysteine; by EIIA" evidence="1 3">
    <location>
        <position position="378"/>
    </location>
</feature>
<feature type="modified residue" description="Phosphohistidine; by HPr" evidence="1">
    <location>
        <position position="542"/>
    </location>
</feature>
<organism>
    <name type="scientific">Pasteurella multocida (strain Pm70)</name>
    <dbReference type="NCBI Taxonomy" id="272843"/>
    <lineage>
        <taxon>Bacteria</taxon>
        <taxon>Pseudomonadati</taxon>
        <taxon>Pseudomonadota</taxon>
        <taxon>Gammaproteobacteria</taxon>
        <taxon>Pasteurellales</taxon>
        <taxon>Pasteurellaceae</taxon>
        <taxon>Pasteurella</taxon>
    </lineage>
</organism>
<sequence>MLSANAKVKVQNFGRFLSNMVMPNIGAFIAWGFITALFIPTGWLPNETLAKLVGPMITYLLPLLIGYSGGKLIAGERGAVVGAIATAGVIVGTDIPMFLGAMIAGPTGGWAIKRFDKWADGKIKSGFEMLVNNFSSGIIGMILAILFFWLIGPAVKALSTMLAAGVDILVKAHLLPLTSIFVEPAKILFLNNAINHGIFSPLGIQQSQEFGQSIFFLIEANPGPGLGVLLAYIIFGKGTAKQTAGGATIIHFFGGIHEIYFPYVLMNPRLLLAVIAGGVSGVFTLVLFNAGLVAPASPGSIIAVLLMTPQNAIVGVLASVAIAATVSFVIASFFLKIQKEENGHSLEKMQAASKAMKSGVQFNTPARYQGVQKIFVACDAGMGSSAMGASMLRKKVKEAGLAIEVTNCAINDLPEDAQLVITHQDLTLRAKKHTPNAMHFSLNNFLDAHFYDNLVQDLSNTKVADLAKVSTLEPQEAPQTAFVLTEKQVFLGLKAANKEEAIRFAGERLVESGFVLPSYVDAMFEREKMVSTYLGEGIAVPHGTIEAKDAVLKTGVVVCQYPEGVKFNEDEEDSIAKLVIGIAAKNNEHLQVVSAITNALDNEDAIRILSETDDVEKVLALLKA</sequence>
<comment type="function">
    <text evidence="1">The phosphoenolpyruvate-dependent sugar phosphotransferase system (sugar PTS), a major carbohydrate active transport system, catalyzes the phosphorylation of incoming sugar substrates concomitantly with their translocation across the cell membrane. This system is involved in D-mannitol transport.</text>
</comment>
<comment type="catalytic activity">
    <reaction evidence="1">
        <text>D-mannitol(out) + N(pros)-phospho-L-histidyl-[protein] = D-mannitol 1-phosphate(in) + L-histidyl-[protein]</text>
        <dbReference type="Rhea" id="RHEA:33363"/>
        <dbReference type="Rhea" id="RHEA-COMP:9745"/>
        <dbReference type="Rhea" id="RHEA-COMP:9746"/>
        <dbReference type="ChEBI" id="CHEBI:16899"/>
        <dbReference type="ChEBI" id="CHEBI:29979"/>
        <dbReference type="ChEBI" id="CHEBI:61381"/>
        <dbReference type="ChEBI" id="CHEBI:64837"/>
        <dbReference type="EC" id="2.7.1.197"/>
    </reaction>
</comment>
<comment type="subunit">
    <text evidence="1">Homodimer.</text>
</comment>
<comment type="subcellular location">
    <subcellularLocation>
        <location evidence="1 4">Cell inner membrane</location>
        <topology evidence="1 4">Multi-pass membrane protein</topology>
    </subcellularLocation>
</comment>
<comment type="induction">
    <text evidence="1">Induced by mannitol. Repressed by MltR.</text>
</comment>
<comment type="domain">
    <text evidence="4">The EIIC type-2 domain forms the PTS system translocation channel and contains the specific substrate-binding site.</text>
</comment>
<comment type="domain">
    <text evidence="3">The PTS EIIB type-2 domain is phosphorylated by phospho-EIIA on a cysteinyl residue. Then, it transfers the phosphoryl group to the sugar substrate concomitantly with the sugar uptake processed by the PTS EIIC type-2 domain.</text>
</comment>
<comment type="domain">
    <text evidence="2">The PTS EIIA type-2 domain is phosphorylated by phospho-HPr on a histidyl residue. Then, it transfers the phosphoryl group to the PTS EIIB type-2 domain.</text>
</comment>
<comment type="PTM">
    <text evidence="1">An intramolecular phosphotransfer takes places between His-542 and Cys-378.</text>
</comment>
<comment type="sequence caution" evidence="5">
    <conflict type="erroneous initiation">
        <sequence resource="EMBL-CDS" id="AAK03145"/>
    </conflict>
    <text>Extended N-terminus.</text>
</comment>
<dbReference type="EC" id="2.7.1.197" evidence="1"/>
<dbReference type="EMBL" id="AE004439">
    <property type="protein sequence ID" value="AAK03145.1"/>
    <property type="status" value="ALT_INIT"/>
    <property type="molecule type" value="Genomic_DNA"/>
</dbReference>
<dbReference type="RefSeq" id="WP_005754557.1">
    <property type="nucleotide sequence ID" value="NC_002663.1"/>
</dbReference>
<dbReference type="SMR" id="Q9CLY8"/>
<dbReference type="STRING" id="272843.PM1061"/>
<dbReference type="EnsemblBacteria" id="AAK03145">
    <property type="protein sequence ID" value="AAK03145"/>
    <property type="gene ID" value="PM1061"/>
</dbReference>
<dbReference type="KEGG" id="pmu:PM1061"/>
<dbReference type="PATRIC" id="fig|272843.6.peg.1075"/>
<dbReference type="HOGENOM" id="CLU_028721_1_0_6"/>
<dbReference type="OrthoDB" id="9814222at2"/>
<dbReference type="Proteomes" id="UP000000809">
    <property type="component" value="Chromosome"/>
</dbReference>
<dbReference type="GO" id="GO:0005886">
    <property type="term" value="C:plasma membrane"/>
    <property type="evidence" value="ECO:0007669"/>
    <property type="project" value="UniProtKB-SubCell"/>
</dbReference>
<dbReference type="GO" id="GO:0016301">
    <property type="term" value="F:kinase activity"/>
    <property type="evidence" value="ECO:0007669"/>
    <property type="project" value="UniProtKB-KW"/>
</dbReference>
<dbReference type="GO" id="GO:0022872">
    <property type="term" value="F:protein-N(PI)-phosphohistidine-mannitol phosphotransferase system transmembrane transporter activity"/>
    <property type="evidence" value="ECO:0007669"/>
    <property type="project" value="InterPro"/>
</dbReference>
<dbReference type="GO" id="GO:0090563">
    <property type="term" value="F:protein-phosphocysteine-sugar phosphotransferase activity"/>
    <property type="evidence" value="ECO:0007669"/>
    <property type="project" value="TreeGrafter"/>
</dbReference>
<dbReference type="GO" id="GO:0009401">
    <property type="term" value="P:phosphoenolpyruvate-dependent sugar phosphotransferase system"/>
    <property type="evidence" value="ECO:0007669"/>
    <property type="project" value="UniProtKB-KW"/>
</dbReference>
<dbReference type="CDD" id="cd00211">
    <property type="entry name" value="PTS_IIA_fru"/>
    <property type="match status" value="1"/>
</dbReference>
<dbReference type="CDD" id="cd05567">
    <property type="entry name" value="PTS_IIB_mannitol"/>
    <property type="match status" value="1"/>
</dbReference>
<dbReference type="Gene3D" id="3.40.50.2300">
    <property type="match status" value="1"/>
</dbReference>
<dbReference type="Gene3D" id="3.40.930.10">
    <property type="entry name" value="Mannitol-specific EII, Chain A"/>
    <property type="match status" value="1"/>
</dbReference>
<dbReference type="InterPro" id="IPR016152">
    <property type="entry name" value="PTrfase/Anion_transptr"/>
</dbReference>
<dbReference type="InterPro" id="IPR002178">
    <property type="entry name" value="PTS_EIIA_type-2_dom"/>
</dbReference>
<dbReference type="InterPro" id="IPR036095">
    <property type="entry name" value="PTS_EIIB-like_sf"/>
</dbReference>
<dbReference type="InterPro" id="IPR013011">
    <property type="entry name" value="PTS_EIIB_2"/>
</dbReference>
<dbReference type="InterPro" id="IPR003501">
    <property type="entry name" value="PTS_EIIB_2/3"/>
</dbReference>
<dbReference type="InterPro" id="IPR029503">
    <property type="entry name" value="PTS_EIIB_mannitol"/>
</dbReference>
<dbReference type="InterPro" id="IPR003352">
    <property type="entry name" value="PTS_EIIC"/>
</dbReference>
<dbReference type="InterPro" id="IPR013014">
    <property type="entry name" value="PTS_EIIC_2"/>
</dbReference>
<dbReference type="InterPro" id="IPR004718">
    <property type="entry name" value="PTS_IIC_mtl"/>
</dbReference>
<dbReference type="InterPro" id="IPR050893">
    <property type="entry name" value="Sugar_PTS"/>
</dbReference>
<dbReference type="NCBIfam" id="TIGR00851">
    <property type="entry name" value="mtlA"/>
    <property type="match status" value="1"/>
</dbReference>
<dbReference type="NCBIfam" id="NF011663">
    <property type="entry name" value="PRK15083.1"/>
    <property type="match status" value="1"/>
</dbReference>
<dbReference type="PANTHER" id="PTHR30181">
    <property type="entry name" value="MANNITOL PERMEASE IIC COMPONENT"/>
    <property type="match status" value="1"/>
</dbReference>
<dbReference type="PANTHER" id="PTHR30181:SF2">
    <property type="entry name" value="PTS SYSTEM MANNITOL-SPECIFIC EIICBA COMPONENT"/>
    <property type="match status" value="1"/>
</dbReference>
<dbReference type="Pfam" id="PF00359">
    <property type="entry name" value="PTS_EIIA_2"/>
    <property type="match status" value="1"/>
</dbReference>
<dbReference type="Pfam" id="PF02378">
    <property type="entry name" value="PTS_EIIC"/>
    <property type="match status" value="1"/>
</dbReference>
<dbReference type="Pfam" id="PF02302">
    <property type="entry name" value="PTS_IIB"/>
    <property type="match status" value="1"/>
</dbReference>
<dbReference type="SUPFAM" id="SSF55804">
    <property type="entry name" value="Phoshotransferase/anion transport protein"/>
    <property type="match status" value="1"/>
</dbReference>
<dbReference type="SUPFAM" id="SSF52794">
    <property type="entry name" value="PTS system IIB component-like"/>
    <property type="match status" value="1"/>
</dbReference>
<dbReference type="PROSITE" id="PS51094">
    <property type="entry name" value="PTS_EIIA_TYPE_2"/>
    <property type="match status" value="1"/>
</dbReference>
<dbReference type="PROSITE" id="PS00372">
    <property type="entry name" value="PTS_EIIA_TYPE_2_HIS"/>
    <property type="match status" value="1"/>
</dbReference>
<dbReference type="PROSITE" id="PS51099">
    <property type="entry name" value="PTS_EIIB_TYPE_2"/>
    <property type="match status" value="1"/>
</dbReference>
<dbReference type="PROSITE" id="PS51104">
    <property type="entry name" value="PTS_EIIC_TYPE_2"/>
    <property type="match status" value="1"/>
</dbReference>
<keyword id="KW-0997">Cell inner membrane</keyword>
<keyword id="KW-1003">Cell membrane</keyword>
<keyword id="KW-0418">Kinase</keyword>
<keyword id="KW-0472">Membrane</keyword>
<keyword id="KW-0597">Phosphoprotein</keyword>
<keyword id="KW-0598">Phosphotransferase system</keyword>
<keyword id="KW-1185">Reference proteome</keyword>
<keyword id="KW-0762">Sugar transport</keyword>
<keyword id="KW-0808">Transferase</keyword>
<keyword id="KW-0812">Transmembrane</keyword>
<keyword id="KW-1133">Transmembrane helix</keyword>
<keyword id="KW-0813">Transport</keyword>
<evidence type="ECO:0000250" key="1">
    <source>
        <dbReference type="UniProtKB" id="P00550"/>
    </source>
</evidence>
<evidence type="ECO:0000255" key="2">
    <source>
        <dbReference type="PROSITE-ProRule" id="PRU00417"/>
    </source>
</evidence>
<evidence type="ECO:0000255" key="3">
    <source>
        <dbReference type="PROSITE-ProRule" id="PRU00422"/>
    </source>
</evidence>
<evidence type="ECO:0000255" key="4">
    <source>
        <dbReference type="PROSITE-ProRule" id="PRU00427"/>
    </source>
</evidence>
<evidence type="ECO:0000305" key="5"/>